<dbReference type="EMBL" id="EU233868">
    <property type="protein sequence ID" value="ABY71687.1"/>
    <property type="molecule type" value="mRNA"/>
</dbReference>
<dbReference type="SMR" id="B1P1D7"/>
<dbReference type="ArachnoServer" id="AS000816">
    <property type="toxin name" value="U13-theraphotoxin-Cg1a"/>
</dbReference>
<dbReference type="GO" id="GO:0005576">
    <property type="term" value="C:extracellular region"/>
    <property type="evidence" value="ECO:0007669"/>
    <property type="project" value="UniProtKB-SubCell"/>
</dbReference>
<dbReference type="GO" id="GO:0008200">
    <property type="term" value="F:ion channel inhibitor activity"/>
    <property type="evidence" value="ECO:0007669"/>
    <property type="project" value="InterPro"/>
</dbReference>
<dbReference type="GO" id="GO:0090729">
    <property type="term" value="F:toxin activity"/>
    <property type="evidence" value="ECO:0007669"/>
    <property type="project" value="UniProtKB-KW"/>
</dbReference>
<dbReference type="InterPro" id="IPR011696">
    <property type="entry name" value="Huwentoxin-1"/>
</dbReference>
<dbReference type="Pfam" id="PF07740">
    <property type="entry name" value="Toxin_12"/>
    <property type="match status" value="1"/>
</dbReference>
<dbReference type="SUPFAM" id="SSF57059">
    <property type="entry name" value="omega toxin-like"/>
    <property type="match status" value="1"/>
</dbReference>
<reference key="1">
    <citation type="journal article" date="2008" name="Cell. Mol. Life Sci.">
        <title>Molecular diversity and evolution of cystine knot toxins of the tarantula Chilobrachys jingzhao.</title>
        <authorList>
            <person name="Chen J."/>
            <person name="Deng M."/>
            <person name="He Q."/>
            <person name="Meng E."/>
            <person name="Jiang L."/>
            <person name="Liao Z."/>
            <person name="Rong M."/>
            <person name="Liang S."/>
        </authorList>
    </citation>
    <scope>NUCLEOTIDE SEQUENCE [LARGE SCALE MRNA]</scope>
    <source>
        <tissue>Venom gland</tissue>
    </source>
</reference>
<reference key="2">
    <citation type="journal article" date="2007" name="Proteomics">
        <title>Proteomic and peptidomic analysis of the venom from Chinese tarantula Chilobrachys jingzhao.</title>
        <authorList>
            <person name="Liao Z."/>
            <person name="Cao J."/>
            <person name="Li S."/>
            <person name="Yan X."/>
            <person name="Hu W."/>
            <person name="He Q."/>
            <person name="Chen J."/>
            <person name="Tang J."/>
            <person name="Xie J."/>
            <person name="Liang S."/>
        </authorList>
    </citation>
    <scope>PROTEIN SEQUENCE OF 53-63</scope>
    <scope>MASS SPECTROMETRY</scope>
    <scope>SUBCELLULAR LOCATION</scope>
    <source>
        <tissue>Venom</tissue>
    </source>
</reference>
<accession>B1P1D7</accession>
<feature type="signal peptide" evidence="2">
    <location>
        <begin position="1"/>
        <end position="21"/>
    </location>
</feature>
<feature type="propeptide" id="PRO_0000398475" evidence="3">
    <location>
        <begin position="22"/>
        <end position="52"/>
    </location>
</feature>
<feature type="peptide" id="PRO_0000398476" description="U13-theraphotoxin-Cg1a">
    <location>
        <begin position="53"/>
        <end position="88"/>
    </location>
</feature>
<feature type="disulfide bond" evidence="1">
    <location>
        <begin position="54"/>
        <end position="68"/>
    </location>
</feature>
<feature type="disulfide bond" evidence="1">
    <location>
        <begin position="61"/>
        <end position="73"/>
    </location>
</feature>
<feature type="disulfide bond" evidence="1">
    <location>
        <begin position="67"/>
        <end position="80"/>
    </location>
</feature>
<protein>
    <recommendedName>
        <fullName>U13-theraphotoxin-Cg1a</fullName>
        <shortName>U13-TRTX-Cg1a</shortName>
    </recommendedName>
    <alternativeName>
        <fullName>Jingzhaotoxin-36</fullName>
        <shortName>JZTX-36</shortName>
    </alternativeName>
    <alternativeName>
        <fullName>Peptide F1-27.85</fullName>
    </alternativeName>
</protein>
<comment type="function">
    <text>Probable ion channel inhibitor.</text>
</comment>
<comment type="subcellular location">
    <subcellularLocation>
        <location evidence="3">Secreted</location>
    </subcellularLocation>
</comment>
<comment type="tissue specificity">
    <text evidence="5">Expressed by the venom gland.</text>
</comment>
<comment type="domain">
    <text evidence="1">The presence of a 'disulfide through disulfide knot' structurally defines this protein as a knottin.</text>
</comment>
<comment type="mass spectrometry">
    <text>Monoisotopic mass.</text>
</comment>
<comment type="similarity">
    <text evidence="4">Belongs to the neurotoxin 10 (Hwtx-1) family. 41 (Jztx-36) subfamily.</text>
</comment>
<comment type="caution">
    <text evidence="4">The measured mass obtained by MALDI is higher than the calculated mass.</text>
</comment>
<sequence>MKVSVLITLAVLGVMFVWASAAELEQSGSDQKDSDSPAWLKSMERIFQSEERDCRKMFGGCSKHEDCCAHLACKRTFNYCAWDGSFSK</sequence>
<keyword id="KW-0903">Direct protein sequencing</keyword>
<keyword id="KW-1015">Disulfide bond</keyword>
<keyword id="KW-0872">Ion channel impairing toxin</keyword>
<keyword id="KW-0960">Knottin</keyword>
<keyword id="KW-0964">Secreted</keyword>
<keyword id="KW-0732">Signal</keyword>
<keyword id="KW-0800">Toxin</keyword>
<proteinExistence type="evidence at protein level"/>
<name>JZT36_CHIGU</name>
<evidence type="ECO:0000250" key="1">
    <source>
        <dbReference type="UniProtKB" id="P0C247"/>
    </source>
</evidence>
<evidence type="ECO:0000255" key="2"/>
<evidence type="ECO:0000269" key="3">
    <source>
    </source>
</evidence>
<evidence type="ECO:0000305" key="4"/>
<evidence type="ECO:0000305" key="5">
    <source>
    </source>
</evidence>
<organism>
    <name type="scientific">Chilobrachys guangxiensis</name>
    <name type="common">Chinese earth tiger tarantula</name>
    <name type="synonym">Chilobrachys jingzhao</name>
    <dbReference type="NCBI Taxonomy" id="278060"/>
    <lineage>
        <taxon>Eukaryota</taxon>
        <taxon>Metazoa</taxon>
        <taxon>Ecdysozoa</taxon>
        <taxon>Arthropoda</taxon>
        <taxon>Chelicerata</taxon>
        <taxon>Arachnida</taxon>
        <taxon>Araneae</taxon>
        <taxon>Mygalomorphae</taxon>
        <taxon>Theraphosidae</taxon>
        <taxon>Chilobrachys</taxon>
    </lineage>
</organism>